<comment type="function">
    <text evidence="7 8 9 10 13 14 15 16 17">Pore-forming subunit of a heterotetrameric, non-selective cation channel that is permeable to Ca(2+) (PubMed:16891422, PubMed:18535624, PubMed:20406802, PubMed:21185261, PubMed:22420714, PubMed:34381056). Also shows permeability towards NA(1+), K(+) and Mg(2+) (PubMed:18535624, PubMed:34381056). Heterotetrameric complex channel is activated by external low pH and Ca(2+), but opens only when the extracellular pH rises again and after the removal of acid stimulus (PubMed:16891422, PubMed:16929298, PubMed:18535624, PubMed:20406802, PubMed:34381056). May act as a sour taste receptor in gustatory cells; however, its contribution to sour taste perception is unclear in vivo and may be indirect (PubMed:16891422, PubMed:21098668, PubMed:21625513).</text>
</comment>
<comment type="catalytic activity">
    <reaction evidence="7 9 10 14 16 17">
        <text>Ca(2+)(in) = Ca(2+)(out)</text>
        <dbReference type="Rhea" id="RHEA:29671"/>
        <dbReference type="ChEBI" id="CHEBI:29108"/>
    </reaction>
</comment>
<comment type="catalytic activity">
    <reaction evidence="9 17">
        <text>Na(+)(in) = Na(+)(out)</text>
        <dbReference type="Rhea" id="RHEA:34963"/>
        <dbReference type="ChEBI" id="CHEBI:29101"/>
    </reaction>
</comment>
<comment type="catalytic activity">
    <reaction evidence="9">
        <text>K(+)(in) = K(+)(out)</text>
        <dbReference type="Rhea" id="RHEA:29463"/>
        <dbReference type="ChEBI" id="CHEBI:29103"/>
    </reaction>
</comment>
<comment type="catalytic activity">
    <reaction evidence="9 17">
        <text>Mg(2+)(in) = Mg(2+)(out)</text>
        <dbReference type="Rhea" id="RHEA:29827"/>
        <dbReference type="ChEBI" id="CHEBI:18420"/>
    </reaction>
</comment>
<comment type="activity regulation">
    <text evidence="1 10 16 17">The non-selective cation channel is gated following an off-response property by acid: gated open after the removal of acid stimulus, but not during acid application (PubMed:20406802). Non-selective cation channel activity is inhibited by capsaicin (PubMed:22420714). Regulation of non-selective cation channel activity by external Ca(2+) is bimodal, first sensitizing and subsequently inactivating the current (By similarity). The apo (closed) heterotetramer has an asymmetric selectivity filter (SF) guarded by Lys-2069 in absence of Ca(2+) (PubMed:34381056). However, Ca(2+)-entrance to the SF vestibule is accompanied by a swing motion of Lys-2069 on PKD1L3 (PubMed:34381056).</text>
</comment>
<comment type="subunit">
    <text evidence="7 11 17">Heterotetramer with PKD2L1, composed of 3 subunit of PKD2L1 and 1 subunit of PKD1L3.</text>
</comment>
<comment type="interaction">
    <interactant intactId="EBI-15594779">
        <id>Q2EG98</id>
    </interactant>
    <interactant intactId="EBI-15594711">
        <id>A2A259</id>
        <label>Pkd2l1</label>
    </interactant>
    <organismsDiffer>false</organismsDiffer>
    <experiments>2</experiments>
</comment>
<comment type="subcellular location">
    <subcellularLocation>
        <location evidence="7 9 11 14">Cell membrane</location>
        <topology evidence="17">Multi-pass membrane protein</topology>
    </subcellularLocation>
    <text evidence="7 11 14">Interaction with PKD2L1 is required for localization to the cell membrane.</text>
</comment>
<comment type="alternative products">
    <event type="alternative splicing"/>
    <isoform>
        <id>Q2EG98-8</id>
        <name>8</name>
        <sequence type="displayed"/>
    </isoform>
    <isoform>
        <id>Q2EG98-1</id>
        <name>1</name>
        <name>Variant 1a</name>
        <sequence type="described" ref="VSP_062461 VSP_062462 VSP_062468"/>
    </isoform>
    <isoform>
        <id>Q2EG98-2</id>
        <name>2</name>
        <name>Variant 1b</name>
        <sequence type="described" ref="VSP_062468"/>
    </isoform>
    <isoform>
        <id>Q2EG98-6</id>
        <name>6</name>
        <name>Variant 5</name>
        <sequence type="described" ref="VSP_062460 VSP_062463 VSP_062466"/>
    </isoform>
    <isoform>
        <id>Q2EG98-9</id>
        <name>9</name>
        <name>Variant 2</name>
        <sequence type="described" ref="VSP_062470"/>
    </isoform>
    <isoform>
        <id>Q2EG98-10</id>
        <name>10</name>
        <name>Variant 3</name>
        <sequence type="described" ref="VSP_062469"/>
    </isoform>
    <isoform>
        <id>Q2EG98-11</id>
        <name>11</name>
        <name>Variant 4</name>
        <sequence type="described" ref="VSP_062467"/>
    </isoform>
    <isoform>
        <id>Q2EG98-12</id>
        <name>12</name>
        <name>Variant 6</name>
        <sequence type="described" ref="VSP_062464 VSP_062465"/>
    </isoform>
</comment>
<comment type="tissue specificity">
    <text evidence="6 7 8">Expressed in a subset of taste receptor cells (type III taste cells) distinct from those involved in bitter, sweet and umami taste (PubMed:16805797, PubMed:16891422). Expressed in circumvallate and foliate taste buds, but not in surrounding non-gustatory lingual epithelium cells (PubMed:16891422, PubMed:16929298). Expressed in testis (PubMed:16891422).</text>
</comment>
<comment type="PTM">
    <text evidence="3">Autoproteolytically processed at the GPS region of the GAIN-B domain; this cleavage modulates receptor activity.</text>
</comment>
<comment type="disruption phenotype">
    <text evidence="12 15">No significant reduction in taste responsiveness: mice have normal nerve and behavioral responses to sour stimuli.</text>
</comment>
<comment type="similarity">
    <text evidence="18">Belongs to the polycystin family.</text>
</comment>
<comment type="caution">
    <text evidence="6 10 15 19 20 21 22 23">Pkd1l3 and Pkd2l1 has been initially identified as sour taste receptor in type III gustatory cells, but its role in sour taste reception is controversial (PubMed:16805797). In the circumvallate type III cells, the PKD1L3-PKD2L1 complex is proposed to form the molecular sensor responsible for acid sensing (PubMed:20406802). However, a number of experiments have recently shown that the sour taste receptor activity is probably indirect: mice lacking Pkd1l3 do not show defects in sour taste perception (PubMed:20605874, PubMed:21625513). Moreover, the Pkd1l3-Pkd2l1 heteromer, when expressed in cells does not respond to acid stimuli used to evoke proton currents in taste cells (PubMed:21098668).</text>
</comment>
<comment type="sequence caution" evidence="18">
    <conflict type="frameshift">
        <sequence resource="EMBL-CDS" id="ABD36567"/>
    </conflict>
</comment>
<proteinExistence type="evidence at protein level"/>
<dbReference type="EMBL" id="AY164486">
    <property type="protein sequence ID" value="AAO32799.1"/>
    <property type="molecule type" value="mRNA"/>
</dbReference>
<dbReference type="EMBL" id="DQ382344">
    <property type="protein sequence ID" value="ABD36562.1"/>
    <property type="molecule type" value="mRNA"/>
</dbReference>
<dbReference type="EMBL" id="DQ382345">
    <property type="protein sequence ID" value="ABD36563.1"/>
    <property type="molecule type" value="mRNA"/>
</dbReference>
<dbReference type="EMBL" id="DQ382346">
    <property type="protein sequence ID" value="ABD36564.1"/>
    <property type="molecule type" value="mRNA"/>
</dbReference>
<dbReference type="EMBL" id="DQ382347">
    <property type="protein sequence ID" value="ABD36565.1"/>
    <property type="molecule type" value="mRNA"/>
</dbReference>
<dbReference type="EMBL" id="DQ382348">
    <property type="protein sequence ID" value="ABD36566.1"/>
    <property type="molecule type" value="mRNA"/>
</dbReference>
<dbReference type="EMBL" id="DQ382349">
    <property type="protein sequence ID" value="ABD36567.1"/>
    <property type="status" value="ALT_FRAME"/>
    <property type="molecule type" value="mRNA"/>
</dbReference>
<dbReference type="EMBL" id="DQ382350">
    <property type="protein sequence ID" value="ABD36568.1"/>
    <property type="molecule type" value="mRNA"/>
</dbReference>
<dbReference type="EMBL" id="AC125162">
    <property type="status" value="NOT_ANNOTATED_CDS"/>
    <property type="molecule type" value="Genomic_DNA"/>
</dbReference>
<dbReference type="CCDS" id="CCDS22654.1">
    <molecule id="Q2EG98-8"/>
</dbReference>
<dbReference type="CCDS" id="CCDS40472.1">
    <molecule id="Q2EG98-1"/>
</dbReference>
<dbReference type="CCDS" id="CCDS85608.1">
    <molecule id="Q2EG98-2"/>
</dbReference>
<dbReference type="RefSeq" id="NP_001034789.2">
    <molecule id="Q2EG98-1"/>
    <property type="nucleotide sequence ID" value="NM_001039700.3"/>
</dbReference>
<dbReference type="RefSeq" id="NP_001273383.1">
    <molecule id="Q2EG98-2"/>
    <property type="nucleotide sequence ID" value="NM_001286454.2"/>
</dbReference>
<dbReference type="RefSeq" id="NP_853522.2">
    <molecule id="Q2EG98-8"/>
    <property type="nucleotide sequence ID" value="NM_181544.3"/>
</dbReference>
<dbReference type="PDB" id="7D7E">
    <property type="method" value="EM"/>
    <property type="resolution" value="3.40 A"/>
    <property type="chains" value="A=1632-2150"/>
</dbReference>
<dbReference type="PDB" id="7D7F">
    <property type="method" value="EM"/>
    <property type="resolution" value="3.00 A"/>
    <property type="chains" value="A=1632-2150"/>
</dbReference>
<dbReference type="PDBsum" id="7D7E"/>
<dbReference type="PDBsum" id="7D7F"/>
<dbReference type="EMDB" id="EMD-30606"/>
<dbReference type="EMDB" id="EMD-30607"/>
<dbReference type="SMR" id="Q2EG98"/>
<dbReference type="BioGRID" id="232669">
    <property type="interactions" value="2"/>
</dbReference>
<dbReference type="DIP" id="DIP-61249N"/>
<dbReference type="FunCoup" id="Q2EG98">
    <property type="interactions" value="88"/>
</dbReference>
<dbReference type="IntAct" id="Q2EG98">
    <property type="interactions" value="1"/>
</dbReference>
<dbReference type="STRING" id="10090.ENSMUSP00000104865"/>
<dbReference type="GlyCosmos" id="Q2EG98">
    <property type="glycosylation" value="6 sites, No reported glycans"/>
</dbReference>
<dbReference type="GlyGen" id="Q2EG98">
    <property type="glycosylation" value="6 sites"/>
</dbReference>
<dbReference type="iPTMnet" id="Q2EG98"/>
<dbReference type="PhosphoSitePlus" id="Q2EG98"/>
<dbReference type="PaxDb" id="10090-ENSMUSP00000104865"/>
<dbReference type="ProteomicsDB" id="289591">
    <molecule id="Q2EG98-1"/>
</dbReference>
<dbReference type="ProteomicsDB" id="289592">
    <molecule id="Q2EG98-2"/>
</dbReference>
<dbReference type="ProteomicsDB" id="289598">
    <molecule id="Q2EG98-8"/>
</dbReference>
<dbReference type="Antibodypedia" id="72636">
    <property type="antibodies" value="43 antibodies from 6 providers"/>
</dbReference>
<dbReference type="DNASU" id="244646"/>
<dbReference type="Ensembl" id="ENSMUST00000057344.3">
    <molecule id="Q2EG98-8"/>
    <property type="protein sequence ID" value="ENSMUSP00000051512.3"/>
    <property type="gene ID" value="ENSMUSG00000048827.13"/>
</dbReference>
<dbReference type="Ensembl" id="ENSMUST00000109242.8">
    <molecule id="Q2EG98-1"/>
    <property type="protein sequence ID" value="ENSMUSP00000104865.2"/>
    <property type="gene ID" value="ENSMUSG00000048827.13"/>
</dbReference>
<dbReference type="Ensembl" id="ENSMUST00000212537.2">
    <molecule id="Q2EG98-2"/>
    <property type="protein sequence ID" value="ENSMUSP00000148592.2"/>
    <property type="gene ID" value="ENSMUSG00000048827.13"/>
</dbReference>
<dbReference type="GeneID" id="244646"/>
<dbReference type="KEGG" id="mmu:244646"/>
<dbReference type="UCSC" id="uc009niu.1">
    <molecule id="Q2EG98-8"/>
    <property type="organism name" value="mouse"/>
</dbReference>
<dbReference type="UCSC" id="uc009niv.1">
    <molecule id="Q2EG98-2"/>
    <property type="organism name" value="mouse"/>
</dbReference>
<dbReference type="AGR" id="MGI:2664670"/>
<dbReference type="CTD" id="342372"/>
<dbReference type="MGI" id="MGI:2664670">
    <property type="gene designation" value="Pkd1l3"/>
</dbReference>
<dbReference type="VEuPathDB" id="HostDB:ENSMUSG00000048827"/>
<dbReference type="eggNOG" id="KOG3599">
    <property type="taxonomic scope" value="Eukaryota"/>
</dbReference>
<dbReference type="GeneTree" id="ENSGT00940000162813"/>
<dbReference type="HOGENOM" id="CLU_000913_1_0_1"/>
<dbReference type="InParanoid" id="Q2EG98"/>
<dbReference type="OMA" id="TDYPTTQ"/>
<dbReference type="OrthoDB" id="2121937at2759"/>
<dbReference type="PhylomeDB" id="Q2EG98"/>
<dbReference type="TreeFam" id="TF316484"/>
<dbReference type="BioGRID-ORCS" id="244646">
    <property type="hits" value="0 hits in 76 CRISPR screens"/>
</dbReference>
<dbReference type="ChiTaRS" id="Pkd1l3">
    <property type="organism name" value="mouse"/>
</dbReference>
<dbReference type="PRO" id="PR:Q2EG98"/>
<dbReference type="Proteomes" id="UP000000589">
    <property type="component" value="Chromosome 8"/>
</dbReference>
<dbReference type="RNAct" id="Q2EG98">
    <property type="molecule type" value="protein"/>
</dbReference>
<dbReference type="Bgee" id="ENSMUSG00000048827">
    <property type="expression patterns" value="Expressed in vallate papilla and 56 other cell types or tissues"/>
</dbReference>
<dbReference type="ExpressionAtlas" id="Q2EG98">
    <property type="expression patterns" value="baseline and differential"/>
</dbReference>
<dbReference type="GO" id="GO:0034703">
    <property type="term" value="C:cation channel complex"/>
    <property type="evidence" value="ECO:0000314"/>
    <property type="project" value="BHF-UCL"/>
</dbReference>
<dbReference type="GO" id="GO:0005886">
    <property type="term" value="C:plasma membrane"/>
    <property type="evidence" value="ECO:0000314"/>
    <property type="project" value="UniProtKB"/>
</dbReference>
<dbReference type="GO" id="GO:0043235">
    <property type="term" value="C:receptor complex"/>
    <property type="evidence" value="ECO:0000314"/>
    <property type="project" value="BHF-UCL"/>
</dbReference>
<dbReference type="GO" id="GO:0005509">
    <property type="term" value="F:calcium ion binding"/>
    <property type="evidence" value="ECO:0007669"/>
    <property type="project" value="InterPro"/>
</dbReference>
<dbReference type="GO" id="GO:0005227">
    <property type="term" value="F:calcium-activated cation channel activity"/>
    <property type="evidence" value="ECO:0000314"/>
    <property type="project" value="UniProtKB"/>
</dbReference>
<dbReference type="GO" id="GO:0030246">
    <property type="term" value="F:carbohydrate binding"/>
    <property type="evidence" value="ECO:0007669"/>
    <property type="project" value="UniProtKB-KW"/>
</dbReference>
<dbReference type="GO" id="GO:0160128">
    <property type="term" value="F:pH-gated monoatomic ion channel activity"/>
    <property type="evidence" value="ECO:0000314"/>
    <property type="project" value="UniProtKB"/>
</dbReference>
<dbReference type="GO" id="GO:0044325">
    <property type="term" value="F:transmembrane transporter binding"/>
    <property type="evidence" value="ECO:0000353"/>
    <property type="project" value="BHF-UCL"/>
</dbReference>
<dbReference type="GO" id="GO:0070588">
    <property type="term" value="P:calcium ion transmembrane transport"/>
    <property type="evidence" value="ECO:0000314"/>
    <property type="project" value="UniProtKB"/>
</dbReference>
<dbReference type="GO" id="GO:0071468">
    <property type="term" value="P:cellular response to acidic pH"/>
    <property type="evidence" value="ECO:0000314"/>
    <property type="project" value="BHF-UCL"/>
</dbReference>
<dbReference type="GO" id="GO:0001581">
    <property type="term" value="P:detection of chemical stimulus involved in sensory perception of sour taste"/>
    <property type="evidence" value="ECO:0000314"/>
    <property type="project" value="BHF-UCL"/>
</dbReference>
<dbReference type="GO" id="GO:0006812">
    <property type="term" value="P:monoatomic cation transport"/>
    <property type="evidence" value="ECO:0000314"/>
    <property type="project" value="BHF-UCL"/>
</dbReference>
<dbReference type="CDD" id="cd00037">
    <property type="entry name" value="CLECT"/>
    <property type="match status" value="1"/>
</dbReference>
<dbReference type="CDD" id="cd01752">
    <property type="entry name" value="PLAT_polycystin"/>
    <property type="match status" value="1"/>
</dbReference>
<dbReference type="FunFam" id="2.60.60.20:FF:000008">
    <property type="entry name" value="Polycystic kidney disease 1-like 2, isoform CRA_a"/>
    <property type="match status" value="1"/>
</dbReference>
<dbReference type="FunFam" id="1.10.287.70:FF:000086">
    <property type="entry name" value="Polycystic kidney disease 2"/>
    <property type="match status" value="1"/>
</dbReference>
<dbReference type="FunFam" id="2.60.220.50:FF:000030">
    <property type="entry name" value="Polycystin 1 like 3, transient receptor potential channel interacting"/>
    <property type="match status" value="1"/>
</dbReference>
<dbReference type="Gene3D" id="1.10.287.70">
    <property type="match status" value="1"/>
</dbReference>
<dbReference type="Gene3D" id="2.60.220.50">
    <property type="match status" value="1"/>
</dbReference>
<dbReference type="Gene3D" id="3.10.100.10">
    <property type="entry name" value="Mannose-Binding Protein A, subunit A"/>
    <property type="match status" value="1"/>
</dbReference>
<dbReference type="Gene3D" id="2.60.60.20">
    <property type="entry name" value="PLAT/LH2 domain"/>
    <property type="match status" value="1"/>
</dbReference>
<dbReference type="InterPro" id="IPR016186">
    <property type="entry name" value="C-type_lectin-like/link_sf"/>
</dbReference>
<dbReference type="InterPro" id="IPR016187">
    <property type="entry name" value="CTDL_fold"/>
</dbReference>
<dbReference type="InterPro" id="IPR057244">
    <property type="entry name" value="GAIN_B"/>
</dbReference>
<dbReference type="InterPro" id="IPR046338">
    <property type="entry name" value="GAIN_dom_sf"/>
</dbReference>
<dbReference type="InterPro" id="IPR000203">
    <property type="entry name" value="GPS"/>
</dbReference>
<dbReference type="InterPro" id="IPR013122">
    <property type="entry name" value="PKD1_2_channel"/>
</dbReference>
<dbReference type="InterPro" id="IPR003915">
    <property type="entry name" value="PKD_2"/>
</dbReference>
<dbReference type="InterPro" id="IPR001024">
    <property type="entry name" value="PLAT/LH2_dom"/>
</dbReference>
<dbReference type="InterPro" id="IPR036392">
    <property type="entry name" value="PLAT/LH2_dom_sf"/>
</dbReference>
<dbReference type="InterPro" id="IPR042060">
    <property type="entry name" value="PLAT_polycystin1"/>
</dbReference>
<dbReference type="InterPro" id="IPR051223">
    <property type="entry name" value="Polycystin"/>
</dbReference>
<dbReference type="InterPro" id="IPR046791">
    <property type="entry name" value="Polycystin_dom"/>
</dbReference>
<dbReference type="PANTHER" id="PTHR10877">
    <property type="entry name" value="POLYCYSTIN FAMILY MEMBER"/>
    <property type="match status" value="1"/>
</dbReference>
<dbReference type="PANTHER" id="PTHR10877:SF136">
    <property type="entry name" value="POLYCYSTIN-1-LIKE PROTEIN 3"/>
    <property type="match status" value="1"/>
</dbReference>
<dbReference type="Pfam" id="PF01825">
    <property type="entry name" value="GPS"/>
    <property type="match status" value="1"/>
</dbReference>
<dbReference type="Pfam" id="PF08016">
    <property type="entry name" value="PKD_channel"/>
    <property type="match status" value="1"/>
</dbReference>
<dbReference type="Pfam" id="PF01477">
    <property type="entry name" value="PLAT"/>
    <property type="match status" value="1"/>
</dbReference>
<dbReference type="Pfam" id="PF20519">
    <property type="entry name" value="Polycystin_dom"/>
    <property type="match status" value="1"/>
</dbReference>
<dbReference type="PRINTS" id="PR01433">
    <property type="entry name" value="POLYCYSTIN2"/>
</dbReference>
<dbReference type="SMART" id="SM00303">
    <property type="entry name" value="GPS"/>
    <property type="match status" value="1"/>
</dbReference>
<dbReference type="SMART" id="SM00308">
    <property type="entry name" value="LH2"/>
    <property type="match status" value="1"/>
</dbReference>
<dbReference type="SUPFAM" id="SSF56436">
    <property type="entry name" value="C-type lectin-like"/>
    <property type="match status" value="1"/>
</dbReference>
<dbReference type="SUPFAM" id="SSF49723">
    <property type="entry name" value="Lipase/lipooxygenase domain (PLAT/LH2 domain)"/>
    <property type="match status" value="1"/>
</dbReference>
<dbReference type="PROSITE" id="PS50221">
    <property type="entry name" value="GAIN_B"/>
    <property type="match status" value="1"/>
</dbReference>
<dbReference type="PROSITE" id="PS50095">
    <property type="entry name" value="PLAT"/>
    <property type="match status" value="1"/>
</dbReference>
<reference key="1">
    <citation type="journal article" date="2003" name="Genomics">
        <title>Identification of two novel polycystic kidney disease-1-like genes in human and mouse genomes.</title>
        <authorList>
            <person name="Li A."/>
            <person name="Tian X."/>
            <person name="Sung S.-W."/>
            <person name="Somlo S."/>
        </authorList>
    </citation>
    <scope>NUCLEOTIDE SEQUENCE [MRNA] (ISOFORM 8)</scope>
    <scope>ALTERNATIVE SPLICING</scope>
    <source>
        <strain>C57BL/6J</strain>
        <tissue>Embryo</tissue>
    </source>
</reference>
<reference key="2">
    <citation type="journal article" date="2003" name="Genomics">
        <authorList>
            <person name="Li A."/>
            <person name="Tian X."/>
            <person name="Sung S.-W."/>
            <person name="Somlo S."/>
        </authorList>
    </citation>
    <scope>ERRATUM OF PUBMED:12782129</scope>
</reference>
<reference key="3">
    <citation type="journal article" date="2006" name="J. Neurochem.">
        <title>Two members of the TRPP family of ion channels, Pkd1l3 and Pkd2l1, are co-expressed in a subset of taste receptor cells.</title>
        <authorList>
            <person name="LopezJimenez N.D."/>
            <person name="Cavenagh M.M."/>
            <person name="Sainz E."/>
            <person name="Cruz-Ithier M.A."/>
            <person name="Battey J.F."/>
            <person name="Sullivan S.L."/>
        </authorList>
    </citation>
    <scope>NUCLEOTIDE SEQUENCE [MRNA] (ISOFORMS 1; 2 AND 6)</scope>
    <scope>NUCLEOTIDE SEQUENCE [MRNA] OF 1395-2151 (ISOFORMS 9; 10 AND 11)</scope>
    <scope>NUCLEOTIDE SEQUENCE [MRNA] OF 819-2151 (ISOFORM 12)</scope>
    <scope>ALTERNATIVE SPLICING</scope>
    <scope>TISSUE SPECIFICITY</scope>
    <source>
        <strain>C57BL/6J</strain>
        <tissue>Taste bud</tissue>
    </source>
</reference>
<reference key="4">
    <citation type="journal article" date="2009" name="PLoS Biol.">
        <title>Lineage-specific biology revealed by a finished genome assembly of the mouse.</title>
        <authorList>
            <person name="Church D.M."/>
            <person name="Goodstadt L."/>
            <person name="Hillier L.W."/>
            <person name="Zody M.C."/>
            <person name="Goldstein S."/>
            <person name="She X."/>
            <person name="Bult C.J."/>
            <person name="Agarwala R."/>
            <person name="Cherry J.L."/>
            <person name="DiCuccio M."/>
            <person name="Hlavina W."/>
            <person name="Kapustin Y."/>
            <person name="Meric P."/>
            <person name="Maglott D."/>
            <person name="Birtle Z."/>
            <person name="Marques A.C."/>
            <person name="Graves T."/>
            <person name="Zhou S."/>
            <person name="Teague B."/>
            <person name="Potamousis K."/>
            <person name="Churas C."/>
            <person name="Place M."/>
            <person name="Herschleb J."/>
            <person name="Runnheim R."/>
            <person name="Forrest D."/>
            <person name="Amos-Landgraf J."/>
            <person name="Schwartz D.C."/>
            <person name="Cheng Z."/>
            <person name="Lindblad-Toh K."/>
            <person name="Eichler E.E."/>
            <person name="Ponting C.P."/>
        </authorList>
    </citation>
    <scope>NUCLEOTIDE SEQUENCE [LARGE SCALE GENOMIC DNA]</scope>
    <source>
        <strain>C57BL/6J</strain>
    </source>
</reference>
<reference key="5">
    <citation type="journal article" date="2006" name="Nature">
        <title>The cells and logic for mammalian sour taste detection.</title>
        <authorList>
            <person name="Huang A.L."/>
            <person name="Chen X."/>
            <person name="Hoon M.A."/>
            <person name="Chandrashekar J."/>
            <person name="Guo W."/>
            <person name="Trankner D."/>
            <person name="Ryba N.J."/>
            <person name="Zuker C.S."/>
        </authorList>
    </citation>
    <scope>FUNCTION</scope>
    <scope>TISSUE SPECIFICITY</scope>
</reference>
<reference key="6">
    <citation type="journal article" date="2006" name="Proc. Natl. Acad. Sci. U.S.A.">
        <title>Transient receptor potential family members PKD1L3 and PKD2L1 form a candidate sour taste receptor.</title>
        <authorList>
            <person name="Ishimaru Y."/>
            <person name="Inada H."/>
            <person name="Kubota M."/>
            <person name="Zhuang H."/>
            <person name="Tominaga M."/>
            <person name="Matsunami H."/>
        </authorList>
    </citation>
    <scope>FUNCTION</scope>
    <scope>TRANSPORTER ACTIVITY</scope>
    <scope>SUBCELLULAR LOCATION</scope>
    <scope>INTERACTION WITH PKD2L1</scope>
    <scope>TISSUE SPECIFICITY</scope>
</reference>
<reference key="7">
    <citation type="journal article" date="2008" name="EMBO Rep.">
        <title>Off-response property of an acid-activated cation channel complex PKD1L3-PKD2L1.</title>
        <authorList>
            <person name="Inada H."/>
            <person name="Kawabata F."/>
            <person name="Ishimaru Y."/>
            <person name="Fushiki T."/>
            <person name="Matsunami H."/>
            <person name="Tominaga M."/>
        </authorList>
    </citation>
    <scope>FUNCTION</scope>
    <scope>TRANSPORTER ACTIVITY</scope>
    <scope>SUBCELLULAR LOCATION</scope>
</reference>
<reference key="8">
    <citation type="journal article" date="2010" name="Chem. Senses">
        <title>Taste function in mice with a targeted mutation of the pkd1l3 gene.</title>
        <authorList>
            <person name="Nelson T.M."/>
            <person name="Lopezjimenez N.D."/>
            <person name="Tessarollo L."/>
            <person name="Inoue M."/>
            <person name="Bachmanov A.A."/>
            <person name="Sullivan S.L."/>
        </authorList>
    </citation>
    <scope>DISRUPTION PHENOTYPE</scope>
</reference>
<reference key="9">
    <citation type="journal article" date="2010" name="FASEB J.">
        <title>Interaction between PKD1L3 and PKD2L1 through their transmembrane domains is required for localization of PKD2L1 at taste pores in taste cells of circumvallate and foliate papillae.</title>
        <authorList>
            <person name="Ishimaru Y."/>
            <person name="Katano Y."/>
            <person name="Yamamoto K."/>
            <person name="Akiba M."/>
            <person name="Misaka T."/>
            <person name="Roberts R.W."/>
            <person name="Asakura T."/>
            <person name="Matsunami H."/>
            <person name="Abe K."/>
        </authorList>
    </citation>
    <scope>SUBCELLULAR LOCATION</scope>
    <scope>INTERACTION WITH PKD2L1</scope>
</reference>
<reference key="10">
    <citation type="journal article" date="2010" name="J. Biol. Chem.">
        <title>Activation of polycystic kidney disease-2-like 1 (PKD2L1)-PKD1L3 complex by acid in mouse taste cells.</title>
        <authorList>
            <person name="Kawaguchi H."/>
            <person name="Yamanaka A."/>
            <person name="Uchida K."/>
            <person name="Shibasaki K."/>
            <person name="Sokabe T."/>
            <person name="Maruyama Y."/>
            <person name="Yanagawa Y."/>
            <person name="Murakami S."/>
            <person name="Tominaga M."/>
        </authorList>
    </citation>
    <scope>FUNCTION</scope>
    <scope>TRANSPORTER ACTIVITY</scope>
    <scope>ACTIVITY REGULATION</scope>
</reference>
<reference key="11">
    <citation type="journal article" date="2010" name="Proc. Natl. Acad. Sci. U.S.A.">
        <title>A proton current drives action potentials in genetically identified sour taste cells.</title>
        <authorList>
            <person name="Chang R.B."/>
            <person name="Waters H."/>
            <person name="Liman E.R."/>
        </authorList>
    </citation>
    <scope>FUNCTION</scope>
</reference>
<reference key="12">
    <citation type="journal article" date="2011" name="Biochem. Biophys. Res. Commun.">
        <title>The single pore residue Asp523 in PKD2L1 determines Ca2+ permeation of the PKD1L3/PKD2L1 complex.</title>
        <authorList>
            <person name="Fujimoto C."/>
            <person name="Ishimaru Y."/>
            <person name="Katano Y."/>
            <person name="Misaka T."/>
            <person name="Yamasoba T."/>
            <person name="Asakura T."/>
            <person name="Abe K."/>
        </authorList>
    </citation>
    <scope>FUNCTION</scope>
    <scope>TRANSPORTER ACTIVITY</scope>
    <scope>SUBCELLULAR LOCATION</scope>
    <scope>MUTAGENESIS OF ASP-2049 AND GLU-2072</scope>
</reference>
<reference key="13">
    <citation type="journal article" date="2011" name="PLoS ONE">
        <title>Sour taste responses in mice lacking PKD channels.</title>
        <authorList>
            <person name="Horio N."/>
            <person name="Yoshida R."/>
            <person name="Yasumatsu K."/>
            <person name="Yanagawa Y."/>
            <person name="Ishimaru Y."/>
            <person name="Matsunami H."/>
            <person name="Ninomiya Y."/>
        </authorList>
    </citation>
    <scope>FUNCTION</scope>
    <scope>DISRUPTION PHENOTYPE</scope>
</reference>
<reference key="14">
    <citation type="journal article" date="2012" name="FEBS J.">
        <title>The response of PKD1L3/PKD2L1 to acid stimuli is inhibited by capsaicin and its pungent analogs.</title>
        <authorList>
            <person name="Ishii S."/>
            <person name="Kurokawa A."/>
            <person name="Kishi M."/>
            <person name="Yamagami K."/>
            <person name="Okada S."/>
            <person name="Ishimaru Y."/>
            <person name="Misaka T."/>
        </authorList>
    </citation>
    <scope>FUNCTION</scope>
    <scope>TRANSPORTER ACTIVITY</scope>
    <scope>ACTIVITY REGULATION</scope>
</reference>
<reference evidence="25 26" key="15">
    <citation type="journal article" date="2021" name="Nat. Commun.">
        <title>Structural basis for Ca2+ activation of the heteromeric PKD1L3/PKD2L1 channel.</title>
        <authorList>
            <person name="Su Q."/>
            <person name="Chen M."/>
            <person name="Wang Y."/>
            <person name="Li B."/>
            <person name="Jing D."/>
            <person name="Zhan X."/>
            <person name="Yu Y."/>
            <person name="Shi Y."/>
        </authorList>
    </citation>
    <scope>STRUCTURE BY ELECTRON MICROSCOPY (3.00 ANGSTROMS) OF 1632-2150 IN COMPLEX WITH PKD2L1</scope>
    <scope>FUNCTION</scope>
    <scope>TRANSPORTER ACTIVITY</scope>
    <scope>TOPOLOGY</scope>
    <scope>SUBUNIT</scope>
    <scope>GLYCOSYLATION AT ASN-1712 AND ASN-1822</scope>
</reference>
<organism>
    <name type="scientific">Mus musculus</name>
    <name type="common">Mouse</name>
    <dbReference type="NCBI Taxonomy" id="10090"/>
    <lineage>
        <taxon>Eukaryota</taxon>
        <taxon>Metazoa</taxon>
        <taxon>Chordata</taxon>
        <taxon>Craniata</taxon>
        <taxon>Vertebrata</taxon>
        <taxon>Euteleostomi</taxon>
        <taxon>Mammalia</taxon>
        <taxon>Eutheria</taxon>
        <taxon>Euarchontoglires</taxon>
        <taxon>Glires</taxon>
        <taxon>Rodentia</taxon>
        <taxon>Myomorpha</taxon>
        <taxon>Muroidea</taxon>
        <taxon>Muridae</taxon>
        <taxon>Murinae</taxon>
        <taxon>Mus</taxon>
        <taxon>Mus</taxon>
    </lineage>
</organism>
<sequence>MLLQRRSWLWLYIRIGVILGDILGRKPSIREQHGGNSCYQLNRLFCDFQEADNYCHAQRGRLAHTWNPKLRGFLKSFLNEETVWWVRGNLTLPGSHPGINQTGGDDVLRNQKPGECPSVVTHSNAVFSRWNLCIEKHHFICQAAAFPPQGASIWRNEFGPGPLLPMKRRGAETERHMIPGNGPPLAMCHQPAPPELFETLCFPIDPASSAPPKATHRMTITSLTGRPQVTSDTLASSSPPQGTSDTPASSSPPQVTSATSASSSPPQGTSDTPASSSPPQVTSATSASSSPPQGTSDTPASSSPPQVTSATSASSSPPQGTSDTPASSSPPQVTSATSASSSPPQGTSDTPASSSPPQGTLDTPSSSSPPQGTSDTPASSSPPQGTSETPASNSPPQGTSETPGFSSPPQVTTATLVSSSPPQVTSETPASSSPTQVTSETPASSSPTQVTSDTPASNSPPQGTSDTPGFSSPTQVTTATLVSSSPPQVTSDTPASSSPPQVTSDTPASSSPPQVTSETPASSSPPQVTSDTSASISPPQVISDTPASSSPPQVTSETPASSSPTNMTSDTPASSSPTNMTSDTPASSSPTNMTSDTPASSSPPWPVITEVTRPESTIPAGRSLANITSKAQEDSPLGVISTHPQMSFQSSTSQALDETAGERVPTIPDFQAHSEFQKACAILQRLRDFLPTSPTSAQVSVANLLIDLSEQLLVLPFQKNNSWSSQTPAVSCPFQPLGRLTTTEKSSHQMAQQDMEQVEDMLETSLMALGEIHRAFCQQSLCPQSAVTLASPSATLMLSSQNVSTLPLSTYTLGEPAPLTLGFPSAEALKELLNKHPGVNLQVTGLAFNPFKTLDDKNIVGSIGNVQLSSAYQSIRVHDLIEDIEIMLWRNASMETQPTSLNTSTDHFTISVNITSLEKTLIVTIEPESPLLMTLHLGFQDQLAHTHFYLNISLPRDQVWQKDEEYTWVLTPENLWYGTGTYYIMAVENKSTEAAQHTPVLVSVVTAVTQCYFWDRYNRTWKSDGCQVGPKSTILKTQCLCDHLTFFSSDFFIVPRTVDVENTIKLLLHVTNNPVGVSLLSSLLGFYILLAMWASRKDREDMQKVKVTVLADNDPSSASHYLIQVYTGYRRRAATTAKVVITLYGSEGHSEPHHLCDPEKTVFERGALDVFLLSTGSWLGDLHGLRLWHDNSGDSPSWYVSQVIVSDMTTRKKWHFQCNCWLAVDLGNCERDRVFTPASRSELSSFRHLFSSTIVEKFTQDYLWLSVATRHPWNQFTRVQRLSCCMALLLCDMVINIMFWKMGGTTAKRGTEQLGPLAVTLSELLVSIQTSIILFPIHLIFGRLFQLIHPPEALPQLPFIQAAWPPALVCESPSLTQVVKELKETVGFLLRRNTQLLSECEPSSCSSCDINKLAKLLSGLIYCHLEDEGCHQQTESHWEDAVSENHYHFCRYLLQLLRRLKAHLEALGATQDHQSCDFSEAVSQLQNLQELLETQTLRRGPGPCRHSTSFPILSPGEGKKPMSFCLFRWLKCSCWLLLGVISLASAFFITLYSLELDKDQATSWVISMMLSVLQDIFISQPIKVIFLTLLFSLMANHMPWLNKDKEQHARRIVALWAKCPWSAPGLRDKNNPIYTAPAMNNLAKPTRKAWKKQLSKLTGGTLVQILFLTLLMTTVYSAKDSSRFFLHRAIWKRFSHRFSEIKTVEDFYPWANGTLLPNLYGDYRGFITDGNSFLLGNVLIRQTRIPNDIFFPGSLHKQMKSPPQHQEDRENYGAGWVPPDTNITKVDSIWHYQNQESLGGYPIQGELATYSGGGYVVRLGRNHSAATRVLQHLEQRRWLDHCTKALFVEFTVFNANVNLLCAVTLILESSGVGTFLTSLQLDSLTSLQSSERGFAWIVSQVVYYLLVCYYAFIQGCRLKRQRLAFFTRKRNLLDTSIVLISFSILGLSMQSLSLLHKKMQQYHCDRDRFISFYEALRVNSAVTHLRGFLLLFATVRVWDLLRHHAQLQVINKTLSKAWDEVLGFILIIVVLLSSYAMTFNLLFGWSISDYQSFFRSIVTVVGLLMGTSKHKEVIALYPILGSLLVLSSIILMGLVIINLFVSAILIAFGKERKACEKEATLTDMLLQKLSSLLGIRLHQNPSEEHADNTGY</sequence>
<gene>
    <name evidence="24" type="primary">Pkd1l3</name>
    <name type="ORF">71B10</name>
</gene>
<keyword id="KW-0002">3D-structure</keyword>
<keyword id="KW-0025">Alternative splicing</keyword>
<keyword id="KW-0106">Calcium</keyword>
<keyword id="KW-0109">Calcium transport</keyword>
<keyword id="KW-1003">Cell membrane</keyword>
<keyword id="KW-1015">Disulfide bond</keyword>
<keyword id="KW-0325">Glycoprotein</keyword>
<keyword id="KW-0407">Ion channel</keyword>
<keyword id="KW-0406">Ion transport</keyword>
<keyword id="KW-0430">Lectin</keyword>
<keyword id="KW-0472">Membrane</keyword>
<keyword id="KW-1185">Reference proteome</keyword>
<keyword id="KW-0732">Signal</keyword>
<keyword id="KW-0812">Transmembrane</keyword>
<keyword id="KW-1133">Transmembrane helix</keyword>
<keyword id="KW-0813">Transport</keyword>
<protein>
    <recommendedName>
        <fullName evidence="18">Polycystin-1-like protein 3</fullName>
        <shortName>Polycystin-1L3</shortName>
    </recommendedName>
    <alternativeName>
        <fullName>PC1-like 3 protein</fullName>
    </alternativeName>
    <alternativeName>
        <fullName>Polycystic kidney disease protein 1-like 3</fullName>
    </alternativeName>
</protein>
<accession>Q2EG98</accession>
<accession>E9QPA5</accession>
<accession>Q2EG93</accession>
<accession>Q2EG94</accession>
<accession>Q2EG95</accession>
<accession>Q2EG96</accession>
<accession>Q2EG97</accession>
<accession>Q2EG99</accession>
<accession>Q7TN87</accession>
<feature type="signal peptide" evidence="2">
    <location>
        <begin position="1"/>
        <end position="20"/>
    </location>
</feature>
<feature type="chain" id="PRO_0000322579" description="Polycystin-1-like protein 3" evidence="2">
    <location>
        <begin position="21"/>
        <end position="2151"/>
    </location>
</feature>
<feature type="topological domain" description="Extracellular" evidence="18">
    <location>
        <begin position="25"/>
        <end position="1073"/>
    </location>
</feature>
<feature type="transmembrane region" description="Helical" evidence="2">
    <location>
        <begin position="1074"/>
        <end position="1094"/>
    </location>
</feature>
<feature type="topological domain" description="Cytoplasmic" evidence="18">
    <location>
        <begin position="1095"/>
        <end position="1283"/>
    </location>
</feature>
<feature type="transmembrane region" description="Helical" evidence="2">
    <location>
        <begin position="1284"/>
        <end position="1304"/>
    </location>
</feature>
<feature type="topological domain" description="Extracellular" evidence="18">
    <location>
        <begin position="1305"/>
        <end position="1320"/>
    </location>
</feature>
<feature type="transmembrane region" description="Helical" evidence="2">
    <location>
        <begin position="1321"/>
        <end position="1341"/>
    </location>
</feature>
<feature type="topological domain" description="Cytoplasmic" evidence="18">
    <location>
        <begin position="1342"/>
        <end position="1533"/>
    </location>
</feature>
<feature type="transmembrane region" description="Helical" evidence="2">
    <location>
        <begin position="1534"/>
        <end position="1554"/>
    </location>
</feature>
<feature type="topological domain" description="Extracellular" evidence="18">
    <location>
        <begin position="1555"/>
        <end position="1575"/>
    </location>
</feature>
<feature type="transmembrane region" description="Helical" evidence="2">
    <location>
        <begin position="1576"/>
        <end position="1596"/>
    </location>
</feature>
<feature type="topological domain" description="Cytoplasmic" evidence="18">
    <location>
        <begin position="1597"/>
        <end position="1665"/>
    </location>
</feature>
<feature type="transmembrane region" description="Helical" evidence="17 25 26">
    <location>
        <begin position="1666"/>
        <end position="1676"/>
    </location>
</feature>
<feature type="topological domain" description="Extracellular" evidence="18">
    <location>
        <begin position="1677"/>
        <end position="1892"/>
    </location>
</feature>
<feature type="transmembrane region" description="Helical" evidence="17 25 26">
    <location>
        <begin position="1893"/>
        <end position="1921"/>
    </location>
</feature>
<feature type="topological domain" description="Cytoplasmic" evidence="18">
    <location>
        <begin position="1922"/>
        <end position="1930"/>
    </location>
</feature>
<feature type="transmembrane region" description="Helical" evidence="17 25 26">
    <location>
        <begin position="1931"/>
        <end position="1949"/>
    </location>
</feature>
<feature type="topological domain" description="Extracellular" evidence="18">
    <location>
        <begin position="1950"/>
        <end position="1980"/>
    </location>
</feature>
<feature type="transmembrane region" description="Helical" evidence="17 25 26">
    <location>
        <begin position="1981"/>
        <end position="2002"/>
    </location>
</feature>
<feature type="topological domain" description="Cytoplasmic" evidence="18">
    <location>
        <begin position="2003"/>
        <end position="2019"/>
    </location>
</feature>
<feature type="transmembrane region" description="Helical" evidence="17 25 26">
    <location>
        <begin position="2020"/>
        <end position="2044"/>
    </location>
</feature>
<feature type="topological domain" description="Extracellular" evidence="18">
    <location>
        <begin position="2045"/>
        <end position="2077"/>
    </location>
</feature>
<feature type="transmembrane region" description="Helical" evidence="17 25 26">
    <location>
        <begin position="2078"/>
        <end position="2097"/>
    </location>
</feature>
<feature type="topological domain" description="Cytoplasmic" evidence="18">
    <location>
        <begin position="2098"/>
        <end position="2151"/>
    </location>
</feature>
<feature type="domain" description="C-type lectin">
    <location>
        <begin position="34"/>
        <end position="142"/>
    </location>
</feature>
<feature type="domain" description="GAIN-B" evidence="3">
    <location>
        <begin position="899"/>
        <end position="1061"/>
    </location>
</feature>
<feature type="domain" description="PLAT" evidence="4">
    <location>
        <begin position="1119"/>
        <end position="1236"/>
    </location>
</feature>
<feature type="region of interest" description="Disordered" evidence="5">
    <location>
        <begin position="222"/>
        <end position="609"/>
    </location>
</feature>
<feature type="region of interest" description="GPS" evidence="3">
    <location>
        <begin position="1011"/>
        <end position="1061"/>
    </location>
</feature>
<feature type="region of interest" description="Stachel" evidence="3">
    <location>
        <begin position="1045"/>
        <end position="1061"/>
    </location>
</feature>
<feature type="region of interest" description="Channel pore-region">
    <location>
        <begin position="2043"/>
        <end position="2081"/>
    </location>
</feature>
<feature type="compositionally biased region" description="Polar residues" evidence="5">
    <location>
        <begin position="222"/>
        <end position="245"/>
    </location>
</feature>
<feature type="compositionally biased region" description="Low complexity" evidence="5">
    <location>
        <begin position="246"/>
        <end position="348"/>
    </location>
</feature>
<feature type="compositionally biased region" description="Polar residues" evidence="5">
    <location>
        <begin position="349"/>
        <end position="363"/>
    </location>
</feature>
<feature type="compositionally biased region" description="Polar residues" evidence="5">
    <location>
        <begin position="371"/>
        <end position="600"/>
    </location>
</feature>
<feature type="site" description="Cleavage; by autolysis" evidence="3">
    <location>
        <begin position="1044"/>
        <end position="1045"/>
    </location>
</feature>
<feature type="glycosylation site" description="N-linked (GlcNAc...) asparagine" evidence="2">
    <location>
        <position position="89"/>
    </location>
</feature>
<feature type="glycosylation site" description="N-linked (GlcNAc...) asparagine" evidence="2">
    <location>
        <position position="566"/>
    </location>
</feature>
<feature type="glycosylation site" description="N-linked (GlcNAc...) asparagine" evidence="2">
    <location>
        <position position="579"/>
    </location>
</feature>
<feature type="glycosylation site" description="N-linked (GlcNAc...) asparagine" evidence="2">
    <location>
        <position position="592"/>
    </location>
</feature>
<feature type="glycosylation site" description="N-linked (GlcNAc...) asparagine" evidence="2">
    <location>
        <position position="913"/>
    </location>
</feature>
<feature type="glycosylation site" description="N-linked (GlcNAc...) asparagine" evidence="2">
    <location>
        <position position="951"/>
    </location>
</feature>
<feature type="glycosylation site" description="N-linked (GlcNAc) asparagine" evidence="17 25 26">
    <location>
        <position position="1712"/>
    </location>
</feature>
<feature type="glycosylation site" description="N-linked (GlcNAc) asparagine" evidence="17 25 26">
    <location>
        <position position="1822"/>
    </location>
</feature>
<feature type="disulfide bond" evidence="4">
    <location>
        <begin position="55"/>
        <end position="141"/>
    </location>
</feature>
<feature type="disulfide bond" evidence="4">
    <location>
        <begin position="116"/>
        <end position="133"/>
    </location>
</feature>
<feature type="disulfide bond" evidence="3">
    <location>
        <begin position="1011"/>
        <end position="1039"/>
    </location>
</feature>
<feature type="disulfide bond" evidence="3">
    <location>
        <begin position="1026"/>
        <end position="1041"/>
    </location>
</feature>
<feature type="splice variant" id="VSP_062460" description="In isoform 6.">
    <original>T</original>
    <variation>TDYIL</variation>
    <location>
        <position position="102"/>
    </location>
</feature>
<feature type="splice variant" id="VSP_062461" description="In isoform 1.">
    <location>
        <begin position="699"/>
        <end position="718"/>
    </location>
</feature>
<feature type="splice variant" id="VSP_062462" description="In isoform 1.">
    <original>Q</original>
    <variation>QHPMDGAHNAFGISAGGSEIQSDIQLRSEFE</variation>
    <location>
        <position position="757"/>
    </location>
</feature>
<feature type="splice variant" id="VSP_062463" description="In isoform 6.">
    <original>ELKETVGFLLRRNTQLLSE</original>
    <variation>QCLKTITISAATFSNFCGD</variation>
    <location>
        <begin position="1381"/>
        <end position="1399"/>
    </location>
</feature>
<feature type="splice variant" id="VSP_062464" description="In isoform 12.">
    <original>ELKETVGF</original>
    <variation>VSLVSTVF</variation>
    <location>
        <begin position="1381"/>
        <end position="1388"/>
    </location>
</feature>
<feature type="splice variant" id="VSP_062465" description="In isoform 12.">
    <location>
        <begin position="1389"/>
        <end position="2151"/>
    </location>
</feature>
<feature type="splice variant" id="VSP_062466" description="In isoform 6.">
    <location>
        <begin position="1400"/>
        <end position="2151"/>
    </location>
</feature>
<feature type="splice variant" id="VSP_062467" description="In isoform 11.">
    <location>
        <begin position="1875"/>
        <end position="2151"/>
    </location>
</feature>
<feature type="splice variant" id="VSP_062469" description="In isoform 10.">
    <original>Y</original>
    <variation>SSNLRERSSKSMSSDAEVLAPADAVGSVSGTDGNSGSTKIPASTVTKKCKQARHGGACL</variation>
    <location>
        <position position="2151"/>
    </location>
</feature>
<feature type="splice variant" id="VSP_062468" description="In isoform 2 and isoform 1.">
    <original>Y</original>
    <variation>SSNLRERSSKSMSSDAEVLAPADAVGSVSGTDGNSGSTKVL</variation>
    <location>
        <position position="2151"/>
    </location>
</feature>
<feature type="splice variant" id="VSP_062470" description="In isoform 9.">
    <original>Y</original>
    <variation>SSNLRERSSKSMSSDAEVLAPADAVGSVSGTDGNSGSTKGNEIS</variation>
    <location>
        <position position="2151"/>
    </location>
</feature>
<feature type="mutagenesis site" description="Little or no effect on calcium channel activity." evidence="14">
    <original>D</original>
    <variation>N</variation>
    <location>
        <position position="2049"/>
    </location>
</feature>
<feature type="mutagenesis site" description="Little or no effect on calcium channel activity." evidence="14">
    <original>E</original>
    <variation>Q</variation>
    <location>
        <position position="2072"/>
    </location>
</feature>
<feature type="sequence conflict" description="In Ref. 3; ABD36563." evidence="18" ref="3">
    <original>G</original>
    <variation>V</variation>
    <location>
        <position position="294"/>
    </location>
</feature>
<feature type="sequence conflict" description="In Ref. 3; ABD36562/ABD36564." evidence="18" ref="3">
    <original>T</original>
    <variation>A</variation>
    <location>
        <position position="308"/>
    </location>
</feature>
<feature type="sequence conflict" description="In Ref. 3; ABD36564." evidence="18" ref="3">
    <original>Q</original>
    <variation>L</variation>
    <location>
        <position position="784"/>
    </location>
</feature>
<feature type="sequence conflict" description="In Ref. 3; ABD36564." evidence="18" ref="3">
    <original>N</original>
    <variation>K</variation>
    <location>
        <position position="802"/>
    </location>
</feature>
<feature type="sequence conflict" description="In Ref. 3; ABD36564." evidence="18" ref="3">
    <original>T</original>
    <variation>P</variation>
    <location>
        <position position="812"/>
    </location>
</feature>
<feature type="sequence conflict" description="In Ref. 3; ABD36564." evidence="18" ref="3">
    <original>D</original>
    <variation>G</variation>
    <location>
        <position position="906"/>
    </location>
</feature>
<feature type="sequence conflict" description="In Ref. 1; AAO32799." evidence="18" ref="1">
    <original>I</original>
    <variation>S</variation>
    <location>
        <position position="1053"/>
    </location>
</feature>
<feature type="sequence conflict" description="In Ref. 3; ABD36564." evidence="18" ref="3">
    <original>Q</original>
    <variation>L</variation>
    <location>
        <position position="1103"/>
    </location>
</feature>
<feature type="sequence conflict" description="In Ref. 3; ABD36564." evidence="18" ref="3">
    <original>H</original>
    <variation>L</variation>
    <location>
        <position position="1120"/>
    </location>
</feature>
<feature type="sequence conflict" description="In Ref. 3; ABD36562." evidence="18" ref="3">
    <original>S</original>
    <variation>P</variation>
    <location>
        <position position="1331"/>
    </location>
</feature>
<feature type="sequence conflict" description="In Ref. 3; ABD36562." evidence="18" ref="3">
    <original>R</original>
    <variation>K</variation>
    <location>
        <position position="1528"/>
    </location>
</feature>
<feature type="sequence conflict" description="In Ref. 3; ABD36563/ABD36566/ABD36567/ABD36568." evidence="18" ref="3">
    <original>H</original>
    <variation>R</variation>
    <location>
        <position position="1608"/>
    </location>
</feature>
<feature type="helix" evidence="28">
    <location>
        <begin position="1665"/>
        <end position="1676"/>
    </location>
</feature>
<feature type="helix" evidence="28">
    <location>
        <begin position="1682"/>
        <end position="1694"/>
    </location>
</feature>
<feature type="turn" evidence="28">
    <location>
        <begin position="1695"/>
        <end position="1697"/>
    </location>
</feature>
<feature type="helix" evidence="28">
    <location>
        <begin position="1698"/>
        <end position="1700"/>
    </location>
</feature>
<feature type="helix" evidence="28">
    <location>
        <begin position="1707"/>
        <end position="1714"/>
    </location>
</feature>
<feature type="helix" evidence="28">
    <location>
        <begin position="1716"/>
        <end position="1719"/>
    </location>
</feature>
<feature type="strand" evidence="27">
    <location>
        <begin position="1722"/>
        <end position="1725"/>
    </location>
</feature>
<feature type="strand" evidence="28">
    <location>
        <begin position="1726"/>
        <end position="1734"/>
    </location>
</feature>
<feature type="strand" evidence="28">
    <location>
        <begin position="1739"/>
        <end position="1744"/>
    </location>
</feature>
<feature type="strand" evidence="27">
    <location>
        <begin position="1757"/>
        <end position="1759"/>
    </location>
</feature>
<feature type="turn" evidence="28">
    <location>
        <begin position="1774"/>
        <end position="1776"/>
    </location>
</feature>
<feature type="strand" evidence="27">
    <location>
        <begin position="1780"/>
        <end position="1783"/>
    </location>
</feature>
<feature type="strand" evidence="28">
    <location>
        <begin position="1787"/>
        <end position="1791"/>
    </location>
</feature>
<feature type="turn" evidence="28">
    <location>
        <begin position="1795"/>
        <end position="1797"/>
    </location>
</feature>
<feature type="strand" evidence="28">
    <location>
        <begin position="1814"/>
        <end position="1818"/>
    </location>
</feature>
<feature type="strand" evidence="28">
    <location>
        <begin position="1821"/>
        <end position="1823"/>
    </location>
</feature>
<feature type="helix" evidence="28">
    <location>
        <begin position="1824"/>
        <end position="1835"/>
    </location>
</feature>
<feature type="strand" evidence="28">
    <location>
        <begin position="1843"/>
        <end position="1854"/>
    </location>
</feature>
<feature type="turn" evidence="28">
    <location>
        <begin position="1855"/>
        <end position="1858"/>
    </location>
</feature>
<feature type="strand" evidence="28">
    <location>
        <begin position="1859"/>
        <end position="1869"/>
    </location>
</feature>
<feature type="strand" evidence="28">
    <location>
        <begin position="1871"/>
        <end position="1873"/>
    </location>
</feature>
<feature type="strand" evidence="28">
    <location>
        <begin position="1875"/>
        <end position="1884"/>
    </location>
</feature>
<feature type="turn" evidence="28">
    <location>
        <begin position="1894"/>
        <end position="1896"/>
    </location>
</feature>
<feature type="helix" evidence="28">
    <location>
        <begin position="1897"/>
        <end position="1919"/>
    </location>
</feature>
<feature type="strand" evidence="28">
    <location>
        <begin position="1922"/>
        <end position="1924"/>
    </location>
</feature>
<feature type="turn" evidence="28">
    <location>
        <begin position="1925"/>
        <end position="1927"/>
    </location>
</feature>
<feature type="helix" evidence="28">
    <location>
        <begin position="1929"/>
        <end position="1964"/>
    </location>
</feature>
<feature type="helix" evidence="28">
    <location>
        <begin position="1973"/>
        <end position="2003"/>
    </location>
</feature>
<feature type="turn" evidence="28">
    <location>
        <begin position="2004"/>
        <end position="2006"/>
    </location>
</feature>
<feature type="helix" evidence="28">
    <location>
        <begin position="2019"/>
        <end position="2022"/>
    </location>
</feature>
<feature type="helix" evidence="28">
    <location>
        <begin position="2025"/>
        <end position="2043"/>
    </location>
</feature>
<feature type="turn" evidence="28">
    <location>
        <begin position="2044"/>
        <end position="2046"/>
    </location>
</feature>
<feature type="helix" evidence="28">
    <location>
        <begin position="2048"/>
        <end position="2050"/>
    </location>
</feature>
<feature type="helix" evidence="28">
    <location>
        <begin position="2053"/>
        <end position="2065"/>
    </location>
</feature>
<feature type="helix" evidence="28">
    <location>
        <begin position="2072"/>
        <end position="2076"/>
    </location>
</feature>
<feature type="helix" evidence="28">
    <location>
        <begin position="2078"/>
        <end position="2106"/>
    </location>
</feature>
<name>PK1L3_MOUSE</name>
<evidence type="ECO:0000250" key="1">
    <source>
        <dbReference type="UniProtKB" id="Q7Z443"/>
    </source>
</evidence>
<evidence type="ECO:0000255" key="2"/>
<evidence type="ECO:0000255" key="3">
    <source>
        <dbReference type="PROSITE-ProRule" id="PRU00098"/>
    </source>
</evidence>
<evidence type="ECO:0000255" key="4">
    <source>
        <dbReference type="PROSITE-ProRule" id="PRU00152"/>
    </source>
</evidence>
<evidence type="ECO:0000256" key="5">
    <source>
        <dbReference type="SAM" id="MobiDB-lite"/>
    </source>
</evidence>
<evidence type="ECO:0000269" key="6">
    <source>
    </source>
</evidence>
<evidence type="ECO:0000269" key="7">
    <source>
    </source>
</evidence>
<evidence type="ECO:0000269" key="8">
    <source>
    </source>
</evidence>
<evidence type="ECO:0000269" key="9">
    <source>
    </source>
</evidence>
<evidence type="ECO:0000269" key="10">
    <source>
    </source>
</evidence>
<evidence type="ECO:0000269" key="11">
    <source>
    </source>
</evidence>
<evidence type="ECO:0000269" key="12">
    <source>
    </source>
</evidence>
<evidence type="ECO:0000269" key="13">
    <source>
    </source>
</evidence>
<evidence type="ECO:0000269" key="14">
    <source>
    </source>
</evidence>
<evidence type="ECO:0000269" key="15">
    <source>
    </source>
</evidence>
<evidence type="ECO:0000269" key="16">
    <source>
    </source>
</evidence>
<evidence type="ECO:0000269" key="17">
    <source>
    </source>
</evidence>
<evidence type="ECO:0000305" key="18"/>
<evidence type="ECO:0000305" key="19">
    <source>
    </source>
</evidence>
<evidence type="ECO:0000305" key="20">
    <source>
    </source>
</evidence>
<evidence type="ECO:0000305" key="21">
    <source>
    </source>
</evidence>
<evidence type="ECO:0000305" key="22">
    <source>
    </source>
</evidence>
<evidence type="ECO:0000305" key="23">
    <source>
    </source>
</evidence>
<evidence type="ECO:0000312" key="24">
    <source>
        <dbReference type="MGI" id="MGI:2664670"/>
    </source>
</evidence>
<evidence type="ECO:0007744" key="25">
    <source>
        <dbReference type="PDB" id="7D7E"/>
    </source>
</evidence>
<evidence type="ECO:0007744" key="26">
    <source>
        <dbReference type="PDB" id="7D7F"/>
    </source>
</evidence>
<evidence type="ECO:0007829" key="27">
    <source>
        <dbReference type="PDB" id="7D7E"/>
    </source>
</evidence>
<evidence type="ECO:0007829" key="28">
    <source>
        <dbReference type="PDB" id="7D7F"/>
    </source>
</evidence>